<name>RL6_NOCFA</name>
<proteinExistence type="inferred from homology"/>
<organism>
    <name type="scientific">Nocardia farcinica (strain IFM 10152)</name>
    <dbReference type="NCBI Taxonomy" id="247156"/>
    <lineage>
        <taxon>Bacteria</taxon>
        <taxon>Bacillati</taxon>
        <taxon>Actinomycetota</taxon>
        <taxon>Actinomycetes</taxon>
        <taxon>Mycobacteriales</taxon>
        <taxon>Nocardiaceae</taxon>
        <taxon>Nocardia</taxon>
    </lineage>
</organism>
<feature type="chain" id="PRO_0000260906" description="Large ribosomal subunit protein uL6">
    <location>
        <begin position="1"/>
        <end position="179"/>
    </location>
</feature>
<keyword id="KW-1185">Reference proteome</keyword>
<keyword id="KW-0687">Ribonucleoprotein</keyword>
<keyword id="KW-0689">Ribosomal protein</keyword>
<keyword id="KW-0694">RNA-binding</keyword>
<keyword id="KW-0699">rRNA-binding</keyword>
<sequence>MSRIGKKPIAVPSGVEITIDGQHVSVKGPKGTLTHTVAEPITVTRGEDGQLEVTRPNDERRNRSLHGLTRTLIANMIEGVTKGYEKKMEIFGVGYRVQAKGSNLEFALGYSHPVPVEAPEGITFAVESPTKFSVSGIDKQKVGQISAVIHGLRKPDPYKGKGIRYAGEVVRRKVGKTGK</sequence>
<reference key="1">
    <citation type="journal article" date="2004" name="Proc. Natl. Acad. Sci. U.S.A.">
        <title>The complete genomic sequence of Nocardia farcinica IFM 10152.</title>
        <authorList>
            <person name="Ishikawa J."/>
            <person name="Yamashita A."/>
            <person name="Mikami Y."/>
            <person name="Hoshino Y."/>
            <person name="Kurita H."/>
            <person name="Hotta K."/>
            <person name="Shiba T."/>
            <person name="Hattori M."/>
        </authorList>
    </citation>
    <scope>NUCLEOTIDE SEQUENCE [LARGE SCALE GENOMIC DNA]</scope>
    <source>
        <strain>IFM 10152</strain>
    </source>
</reference>
<gene>
    <name evidence="1" type="primary">rplF</name>
    <name type="ordered locus">NFA_7890</name>
</gene>
<dbReference type="EMBL" id="AP006618">
    <property type="protein sequence ID" value="BAD55634.1"/>
    <property type="molecule type" value="Genomic_DNA"/>
</dbReference>
<dbReference type="RefSeq" id="WP_011207320.1">
    <property type="nucleotide sequence ID" value="NC_006361.1"/>
</dbReference>
<dbReference type="SMR" id="Q5Z1Q7"/>
<dbReference type="STRING" id="247156.NFA_7890"/>
<dbReference type="GeneID" id="61131620"/>
<dbReference type="KEGG" id="nfa:NFA_7890"/>
<dbReference type="eggNOG" id="COG0097">
    <property type="taxonomic scope" value="Bacteria"/>
</dbReference>
<dbReference type="HOGENOM" id="CLU_065464_1_2_11"/>
<dbReference type="OrthoDB" id="9805007at2"/>
<dbReference type="Proteomes" id="UP000006820">
    <property type="component" value="Chromosome"/>
</dbReference>
<dbReference type="GO" id="GO:0022625">
    <property type="term" value="C:cytosolic large ribosomal subunit"/>
    <property type="evidence" value="ECO:0007669"/>
    <property type="project" value="TreeGrafter"/>
</dbReference>
<dbReference type="GO" id="GO:0019843">
    <property type="term" value="F:rRNA binding"/>
    <property type="evidence" value="ECO:0007669"/>
    <property type="project" value="UniProtKB-UniRule"/>
</dbReference>
<dbReference type="GO" id="GO:0003735">
    <property type="term" value="F:structural constituent of ribosome"/>
    <property type="evidence" value="ECO:0007669"/>
    <property type="project" value="InterPro"/>
</dbReference>
<dbReference type="GO" id="GO:0002181">
    <property type="term" value="P:cytoplasmic translation"/>
    <property type="evidence" value="ECO:0007669"/>
    <property type="project" value="TreeGrafter"/>
</dbReference>
<dbReference type="FunFam" id="3.90.930.12:FF:000001">
    <property type="entry name" value="50S ribosomal protein L6"/>
    <property type="match status" value="1"/>
</dbReference>
<dbReference type="FunFam" id="3.90.930.12:FF:000002">
    <property type="entry name" value="50S ribosomal protein L6"/>
    <property type="match status" value="1"/>
</dbReference>
<dbReference type="Gene3D" id="3.90.930.12">
    <property type="entry name" value="Ribosomal protein L6, alpha-beta domain"/>
    <property type="match status" value="2"/>
</dbReference>
<dbReference type="HAMAP" id="MF_01365_B">
    <property type="entry name" value="Ribosomal_uL6_B"/>
    <property type="match status" value="1"/>
</dbReference>
<dbReference type="InterPro" id="IPR000702">
    <property type="entry name" value="Ribosomal_uL6-like"/>
</dbReference>
<dbReference type="InterPro" id="IPR036789">
    <property type="entry name" value="Ribosomal_uL6-like_a/b-dom_sf"/>
</dbReference>
<dbReference type="InterPro" id="IPR020040">
    <property type="entry name" value="Ribosomal_uL6_a/b-dom"/>
</dbReference>
<dbReference type="InterPro" id="IPR019906">
    <property type="entry name" value="Ribosomal_uL6_bac-type"/>
</dbReference>
<dbReference type="InterPro" id="IPR002358">
    <property type="entry name" value="Ribosomal_uL6_CS"/>
</dbReference>
<dbReference type="NCBIfam" id="TIGR03654">
    <property type="entry name" value="L6_bact"/>
    <property type="match status" value="1"/>
</dbReference>
<dbReference type="PANTHER" id="PTHR11655">
    <property type="entry name" value="60S/50S RIBOSOMAL PROTEIN L6/L9"/>
    <property type="match status" value="1"/>
</dbReference>
<dbReference type="PANTHER" id="PTHR11655:SF14">
    <property type="entry name" value="LARGE RIBOSOMAL SUBUNIT PROTEIN UL6M"/>
    <property type="match status" value="1"/>
</dbReference>
<dbReference type="Pfam" id="PF00347">
    <property type="entry name" value="Ribosomal_L6"/>
    <property type="match status" value="2"/>
</dbReference>
<dbReference type="PIRSF" id="PIRSF002162">
    <property type="entry name" value="Ribosomal_L6"/>
    <property type="match status" value="1"/>
</dbReference>
<dbReference type="PRINTS" id="PR00059">
    <property type="entry name" value="RIBOSOMALL6"/>
</dbReference>
<dbReference type="SUPFAM" id="SSF56053">
    <property type="entry name" value="Ribosomal protein L6"/>
    <property type="match status" value="2"/>
</dbReference>
<dbReference type="PROSITE" id="PS00525">
    <property type="entry name" value="RIBOSOMAL_L6_1"/>
    <property type="match status" value="1"/>
</dbReference>
<accession>Q5Z1Q7</accession>
<comment type="function">
    <text evidence="1">This protein binds to the 23S rRNA, and is important in its secondary structure. It is located near the subunit interface in the base of the L7/L12 stalk, and near the tRNA binding site of the peptidyltransferase center.</text>
</comment>
<comment type="subunit">
    <text evidence="1">Part of the 50S ribosomal subunit.</text>
</comment>
<comment type="similarity">
    <text evidence="1">Belongs to the universal ribosomal protein uL6 family.</text>
</comment>
<evidence type="ECO:0000255" key="1">
    <source>
        <dbReference type="HAMAP-Rule" id="MF_01365"/>
    </source>
</evidence>
<evidence type="ECO:0000305" key="2"/>
<protein>
    <recommendedName>
        <fullName evidence="1">Large ribosomal subunit protein uL6</fullName>
    </recommendedName>
    <alternativeName>
        <fullName evidence="2">50S ribosomal protein L6</fullName>
    </alternativeName>
</protein>